<dbReference type="EC" id="5.6.1.3" evidence="14"/>
<dbReference type="EMBL" id="AF083331">
    <property type="protein sequence ID" value="AAC33292.1"/>
    <property type="molecule type" value="mRNA"/>
</dbReference>
<dbReference type="EMBL" id="AB070355">
    <property type="protein sequence ID" value="BAB86917.1"/>
    <property type="molecule type" value="mRNA"/>
</dbReference>
<dbReference type="EMBL" id="AB120429">
    <property type="protein sequence ID" value="BAD51401.1"/>
    <property type="molecule type" value="mRNA"/>
</dbReference>
<dbReference type="EMBL" id="AABR07050461">
    <property type="status" value="NOT_ANNOTATED_CDS"/>
    <property type="molecule type" value="Genomic_DNA"/>
</dbReference>
<dbReference type="EMBL" id="AABR07073193">
    <property type="status" value="NOT_ANNOTATED_CDS"/>
    <property type="molecule type" value="Genomic_DNA"/>
</dbReference>
<dbReference type="EMBL" id="AC123476">
    <property type="status" value="NOT_ANNOTATED_CDS"/>
    <property type="molecule type" value="Genomic_DNA"/>
</dbReference>
<dbReference type="EMBL" id="AC135710">
    <property type="status" value="NOT_ANNOTATED_CDS"/>
    <property type="molecule type" value="Genomic_DNA"/>
</dbReference>
<dbReference type="RefSeq" id="NP_476548.1">
    <molecule id="O88658-1"/>
    <property type="nucleotide sequence ID" value="NM_057200.2"/>
</dbReference>
<dbReference type="RefSeq" id="XP_038965109.1">
    <molecule id="O88658-2"/>
    <property type="nucleotide sequence ID" value="XM_039109181.2"/>
</dbReference>
<dbReference type="RefSeq" id="XP_063143164.1">
    <molecule id="O88658-4"/>
    <property type="nucleotide sequence ID" value="XM_063287094.1"/>
</dbReference>
<dbReference type="SMR" id="O88658"/>
<dbReference type="CORUM" id="O88658"/>
<dbReference type="FunCoup" id="O88658">
    <property type="interactions" value="2077"/>
</dbReference>
<dbReference type="IntAct" id="O88658">
    <property type="interactions" value="5"/>
</dbReference>
<dbReference type="MINT" id="O88658"/>
<dbReference type="STRING" id="10116.ENSRNOP00000074322"/>
<dbReference type="iPTMnet" id="O88658"/>
<dbReference type="PhosphoSitePlus" id="O88658"/>
<dbReference type="jPOST" id="O88658"/>
<dbReference type="PaxDb" id="10116-ENSRNOP00000049243"/>
<dbReference type="Ensembl" id="ENSRNOT00000086226.2">
    <molecule id="O88658-4"/>
    <property type="protein sequence ID" value="ENSRNOP00000077156.1"/>
    <property type="gene ID" value="ENSRNOG00000057626.2"/>
</dbReference>
<dbReference type="Ensembl" id="ENSRNOT00000087739.2">
    <molecule id="O88658-1"/>
    <property type="protein sequence ID" value="ENSRNOP00000074322.1"/>
    <property type="gene ID" value="ENSRNOG00000057626.2"/>
</dbReference>
<dbReference type="Ensembl" id="ENSRNOT00055024087">
    <molecule id="O88658-4"/>
    <property type="protein sequence ID" value="ENSRNOP00055019651"/>
    <property type="gene ID" value="ENSRNOG00055013961"/>
</dbReference>
<dbReference type="Ensembl" id="ENSRNOT00060048552">
    <molecule id="O88658-4"/>
    <property type="protein sequence ID" value="ENSRNOP00060040467"/>
    <property type="gene ID" value="ENSRNOG00060027832"/>
</dbReference>
<dbReference type="Ensembl" id="ENSRNOT00065017997">
    <molecule id="O88658-4"/>
    <property type="protein sequence ID" value="ENSRNOP00065013721"/>
    <property type="gene ID" value="ENSRNOG00065011092"/>
</dbReference>
<dbReference type="GeneID" id="117548"/>
<dbReference type="KEGG" id="rno:117548"/>
<dbReference type="UCSC" id="RGD:621520">
    <molecule id="O88658-1"/>
    <property type="organism name" value="rat"/>
</dbReference>
<dbReference type="AGR" id="RGD:621520"/>
<dbReference type="CTD" id="23095"/>
<dbReference type="RGD" id="621520">
    <property type="gene designation" value="Kif1b"/>
</dbReference>
<dbReference type="eggNOG" id="KOG0245">
    <property type="taxonomic scope" value="Eukaryota"/>
</dbReference>
<dbReference type="GeneTree" id="ENSGT00940000157445"/>
<dbReference type="InParanoid" id="O88658"/>
<dbReference type="PhylomeDB" id="O88658"/>
<dbReference type="TreeFam" id="TF105221"/>
<dbReference type="Reactome" id="R-RNO-2132295">
    <property type="pathway name" value="MHC class II antigen presentation"/>
</dbReference>
<dbReference type="Reactome" id="R-RNO-6811434">
    <property type="pathway name" value="COPI-dependent Golgi-to-ER retrograde traffic"/>
</dbReference>
<dbReference type="Reactome" id="R-RNO-983189">
    <property type="pathway name" value="Kinesins"/>
</dbReference>
<dbReference type="PRO" id="PR:O88658"/>
<dbReference type="Proteomes" id="UP000002494">
    <property type="component" value="Chromosome 5"/>
</dbReference>
<dbReference type="Bgee" id="ENSRNOG00000057626">
    <property type="expression patterns" value="Expressed in frontal cortex and 19 other cell types or tissues"/>
</dbReference>
<dbReference type="ExpressionAtlas" id="O88658">
    <property type="expression patterns" value="baseline and differential"/>
</dbReference>
<dbReference type="GO" id="GO:0030424">
    <property type="term" value="C:axon"/>
    <property type="evidence" value="ECO:0000318"/>
    <property type="project" value="GO_Central"/>
</dbReference>
<dbReference type="GO" id="GO:1904115">
    <property type="term" value="C:axon cytoplasm"/>
    <property type="evidence" value="ECO:0007669"/>
    <property type="project" value="GOC"/>
</dbReference>
<dbReference type="GO" id="GO:0005737">
    <property type="term" value="C:cytoplasm"/>
    <property type="evidence" value="ECO:0000318"/>
    <property type="project" value="GO_Central"/>
</dbReference>
<dbReference type="GO" id="GO:0031410">
    <property type="term" value="C:cytoplasmic vesicle"/>
    <property type="evidence" value="ECO:0000314"/>
    <property type="project" value="UniProtKB"/>
</dbReference>
<dbReference type="GO" id="GO:0030425">
    <property type="term" value="C:dendrite"/>
    <property type="evidence" value="ECO:0000318"/>
    <property type="project" value="GO_Central"/>
</dbReference>
<dbReference type="GO" id="GO:0005871">
    <property type="term" value="C:kinesin complex"/>
    <property type="evidence" value="ECO:0000318"/>
    <property type="project" value="GO_Central"/>
</dbReference>
<dbReference type="GO" id="GO:0005764">
    <property type="term" value="C:lysosome"/>
    <property type="evidence" value="ECO:0007669"/>
    <property type="project" value="UniProtKB-SubCell"/>
</dbReference>
<dbReference type="GO" id="GO:0005874">
    <property type="term" value="C:microtubule"/>
    <property type="evidence" value="ECO:0000318"/>
    <property type="project" value="GO_Central"/>
</dbReference>
<dbReference type="GO" id="GO:0005739">
    <property type="term" value="C:mitochondrion"/>
    <property type="evidence" value="ECO:0000314"/>
    <property type="project" value="MGI"/>
</dbReference>
<dbReference type="GO" id="GO:0043005">
    <property type="term" value="C:neuron projection"/>
    <property type="evidence" value="ECO:0000314"/>
    <property type="project" value="UniProtKB"/>
</dbReference>
<dbReference type="GO" id="GO:0098794">
    <property type="term" value="C:postsynapse"/>
    <property type="evidence" value="ECO:0000266"/>
    <property type="project" value="RGD"/>
</dbReference>
<dbReference type="GO" id="GO:0098793">
    <property type="term" value="C:presynapse"/>
    <property type="evidence" value="ECO:0000266"/>
    <property type="project" value="RGD"/>
</dbReference>
<dbReference type="GO" id="GO:0030672">
    <property type="term" value="C:synaptic vesicle membrane"/>
    <property type="evidence" value="ECO:0000250"/>
    <property type="project" value="UniProtKB"/>
</dbReference>
<dbReference type="GO" id="GO:0005524">
    <property type="term" value="F:ATP binding"/>
    <property type="evidence" value="ECO:0007669"/>
    <property type="project" value="UniProtKB-KW"/>
</dbReference>
<dbReference type="GO" id="GO:0016887">
    <property type="term" value="F:ATP hydrolysis activity"/>
    <property type="evidence" value="ECO:0000314"/>
    <property type="project" value="RGD"/>
</dbReference>
<dbReference type="GO" id="GO:0019900">
    <property type="term" value="F:kinase binding"/>
    <property type="evidence" value="ECO:0000353"/>
    <property type="project" value="RGD"/>
</dbReference>
<dbReference type="GO" id="GO:0008017">
    <property type="term" value="F:microtubule binding"/>
    <property type="evidence" value="ECO:0000318"/>
    <property type="project" value="GO_Central"/>
</dbReference>
<dbReference type="GO" id="GO:0003777">
    <property type="term" value="F:microtubule motor activity"/>
    <property type="evidence" value="ECO:0000314"/>
    <property type="project" value="RGD"/>
</dbReference>
<dbReference type="GO" id="GO:0008574">
    <property type="term" value="F:plus-end-directed microtubule motor activity"/>
    <property type="evidence" value="ECO:0000250"/>
    <property type="project" value="UniProtKB"/>
</dbReference>
<dbReference type="GO" id="GO:0097110">
    <property type="term" value="F:scaffold protein binding"/>
    <property type="evidence" value="ECO:0000353"/>
    <property type="project" value="RGD"/>
</dbReference>
<dbReference type="GO" id="GO:1990048">
    <property type="term" value="P:anterograde neuronal dense core vesicle transport"/>
    <property type="evidence" value="ECO:0000316"/>
    <property type="project" value="ARUK-UCL"/>
</dbReference>
<dbReference type="GO" id="GO:0048490">
    <property type="term" value="P:anterograde synaptic vesicle transport"/>
    <property type="evidence" value="ECO:0000250"/>
    <property type="project" value="UniProtKB"/>
</dbReference>
<dbReference type="GO" id="GO:1990090">
    <property type="term" value="P:cellular response to nerve growth factor stimulus"/>
    <property type="evidence" value="ECO:0000270"/>
    <property type="project" value="RGD"/>
</dbReference>
<dbReference type="GO" id="GO:0032418">
    <property type="term" value="P:lysosome localization"/>
    <property type="evidence" value="ECO:0000315"/>
    <property type="project" value="RGD"/>
</dbReference>
<dbReference type="GO" id="GO:0047497">
    <property type="term" value="P:mitochondrion transport along microtubule"/>
    <property type="evidence" value="ECO:0000250"/>
    <property type="project" value="UniProtKB"/>
</dbReference>
<dbReference type="GO" id="GO:0007274">
    <property type="term" value="P:neuromuscular synaptic transmission"/>
    <property type="evidence" value="ECO:0000250"/>
    <property type="project" value="UniProtKB"/>
</dbReference>
<dbReference type="GO" id="GO:0007270">
    <property type="term" value="P:neuron-neuron synaptic transmission"/>
    <property type="evidence" value="ECO:0000250"/>
    <property type="project" value="UniProtKB"/>
</dbReference>
<dbReference type="GO" id="GO:0072384">
    <property type="term" value="P:organelle transport along microtubule"/>
    <property type="evidence" value="ECO:0000315"/>
    <property type="project" value="UniProtKB"/>
</dbReference>
<dbReference type="GO" id="GO:0010628">
    <property type="term" value="P:positive regulation of gene expression"/>
    <property type="evidence" value="ECO:0000315"/>
    <property type="project" value="RGD"/>
</dbReference>
<dbReference type="GO" id="GO:1990778">
    <property type="term" value="P:protein localization to cell periphery"/>
    <property type="evidence" value="ECO:0000315"/>
    <property type="project" value="RGD"/>
</dbReference>
<dbReference type="GO" id="GO:1904647">
    <property type="term" value="P:response to rotenone"/>
    <property type="evidence" value="ECO:0000270"/>
    <property type="project" value="RGD"/>
</dbReference>
<dbReference type="GO" id="GO:1990049">
    <property type="term" value="P:retrograde neuronal dense core vesicle transport"/>
    <property type="evidence" value="ECO:0000316"/>
    <property type="project" value="ARUK-UCL"/>
</dbReference>
<dbReference type="GO" id="GO:0010970">
    <property type="term" value="P:transport along microtubule"/>
    <property type="evidence" value="ECO:0000314"/>
    <property type="project" value="RGD"/>
</dbReference>
<dbReference type="GO" id="GO:0016192">
    <property type="term" value="P:vesicle-mediated transport"/>
    <property type="evidence" value="ECO:0000318"/>
    <property type="project" value="GO_Central"/>
</dbReference>
<dbReference type="CDD" id="cd22727">
    <property type="entry name" value="FHA_KIF1B"/>
    <property type="match status" value="1"/>
</dbReference>
<dbReference type="CDD" id="cd01365">
    <property type="entry name" value="KISc_KIF1A_KIF1B"/>
    <property type="match status" value="1"/>
</dbReference>
<dbReference type="CDD" id="cd01233">
    <property type="entry name" value="PH_KIFIA_KIFIB"/>
    <property type="match status" value="1"/>
</dbReference>
<dbReference type="FunFam" id="2.30.29.30:FF:000023">
    <property type="entry name" value="Kinesin family member 1B"/>
    <property type="match status" value="1"/>
</dbReference>
<dbReference type="FunFam" id="2.60.200.20:FF:000001">
    <property type="entry name" value="Kinesin family member 1B"/>
    <property type="match status" value="1"/>
</dbReference>
<dbReference type="FunFam" id="3.40.850.10:FF:000004">
    <property type="entry name" value="Kinesin-like protein isoform 2"/>
    <property type="match status" value="1"/>
</dbReference>
<dbReference type="Gene3D" id="2.60.200.20">
    <property type="match status" value="1"/>
</dbReference>
<dbReference type="Gene3D" id="6.10.250.2520">
    <property type="match status" value="1"/>
</dbReference>
<dbReference type="Gene3D" id="3.40.850.10">
    <property type="entry name" value="Kinesin motor domain"/>
    <property type="match status" value="1"/>
</dbReference>
<dbReference type="Gene3D" id="2.30.29.30">
    <property type="entry name" value="Pleckstrin-homology domain (PH domain)/Phosphotyrosine-binding domain (PTB)"/>
    <property type="match status" value="1"/>
</dbReference>
<dbReference type="InterPro" id="IPR000253">
    <property type="entry name" value="FHA_dom"/>
</dbReference>
<dbReference type="InterPro" id="IPR022164">
    <property type="entry name" value="Kinesin-like"/>
</dbReference>
<dbReference type="InterPro" id="IPR022140">
    <property type="entry name" value="Kinesin-like_KIF1-typ"/>
</dbReference>
<dbReference type="InterPro" id="IPR032405">
    <property type="entry name" value="Kinesin_assoc"/>
</dbReference>
<dbReference type="InterPro" id="IPR019821">
    <property type="entry name" value="Kinesin_motor_CS"/>
</dbReference>
<dbReference type="InterPro" id="IPR001752">
    <property type="entry name" value="Kinesin_motor_dom"/>
</dbReference>
<dbReference type="InterPro" id="IPR036961">
    <property type="entry name" value="Kinesin_motor_dom_sf"/>
</dbReference>
<dbReference type="InterPro" id="IPR027417">
    <property type="entry name" value="P-loop_NTPase"/>
</dbReference>
<dbReference type="InterPro" id="IPR011993">
    <property type="entry name" value="PH-like_dom_sf"/>
</dbReference>
<dbReference type="InterPro" id="IPR001849">
    <property type="entry name" value="PH_domain"/>
</dbReference>
<dbReference type="InterPro" id="IPR049780">
    <property type="entry name" value="PH_KIFIA_KIFIB"/>
</dbReference>
<dbReference type="InterPro" id="IPR008984">
    <property type="entry name" value="SMAD_FHA_dom_sf"/>
</dbReference>
<dbReference type="PANTHER" id="PTHR47117:SF4">
    <property type="entry name" value="KINESIN-LIKE PROTEIN KIF1B ISOFORM X1"/>
    <property type="match status" value="1"/>
</dbReference>
<dbReference type="PANTHER" id="PTHR47117">
    <property type="entry name" value="STAR-RELATED LIPID TRANSFER PROTEIN 9"/>
    <property type="match status" value="1"/>
</dbReference>
<dbReference type="Pfam" id="PF12473">
    <property type="entry name" value="DUF3694"/>
    <property type="match status" value="1"/>
</dbReference>
<dbReference type="Pfam" id="PF00498">
    <property type="entry name" value="FHA"/>
    <property type="match status" value="1"/>
</dbReference>
<dbReference type="Pfam" id="PF12423">
    <property type="entry name" value="KIF1B"/>
    <property type="match status" value="1"/>
</dbReference>
<dbReference type="Pfam" id="PF00225">
    <property type="entry name" value="Kinesin"/>
    <property type="match status" value="1"/>
</dbReference>
<dbReference type="Pfam" id="PF16183">
    <property type="entry name" value="Kinesin_assoc"/>
    <property type="match status" value="1"/>
</dbReference>
<dbReference type="Pfam" id="PF00169">
    <property type="entry name" value="PH"/>
    <property type="match status" value="1"/>
</dbReference>
<dbReference type="PRINTS" id="PR00380">
    <property type="entry name" value="KINESINHEAVY"/>
</dbReference>
<dbReference type="SMART" id="SM00240">
    <property type="entry name" value="FHA"/>
    <property type="match status" value="1"/>
</dbReference>
<dbReference type="SMART" id="SM00129">
    <property type="entry name" value="KISc"/>
    <property type="match status" value="1"/>
</dbReference>
<dbReference type="SMART" id="SM00233">
    <property type="entry name" value="PH"/>
    <property type="match status" value="1"/>
</dbReference>
<dbReference type="SUPFAM" id="SSF52540">
    <property type="entry name" value="P-loop containing nucleoside triphosphate hydrolases"/>
    <property type="match status" value="1"/>
</dbReference>
<dbReference type="SUPFAM" id="SSF50729">
    <property type="entry name" value="PH domain-like"/>
    <property type="match status" value="1"/>
</dbReference>
<dbReference type="SUPFAM" id="SSF49879">
    <property type="entry name" value="SMAD/FHA domain"/>
    <property type="match status" value="1"/>
</dbReference>
<dbReference type="PROSITE" id="PS50006">
    <property type="entry name" value="FHA_DOMAIN"/>
    <property type="match status" value="1"/>
</dbReference>
<dbReference type="PROSITE" id="PS00411">
    <property type="entry name" value="KINESIN_MOTOR_1"/>
    <property type="match status" value="1"/>
</dbReference>
<dbReference type="PROSITE" id="PS50067">
    <property type="entry name" value="KINESIN_MOTOR_2"/>
    <property type="match status" value="1"/>
</dbReference>
<dbReference type="PROSITE" id="PS50003">
    <property type="entry name" value="PH_DOMAIN"/>
    <property type="match status" value="1"/>
</dbReference>
<name>KIF1B_RAT</name>
<protein>
    <recommendedName>
        <fullName evidence="13">Kinesin-like protein KIF1B</fullName>
        <ecNumber evidence="14">5.6.1.3</ecNumber>
    </recommendedName>
</protein>
<accession>O88658</accession>
<accession>A0A8I5ZK86</accession>
<accession>Q65Z71</accession>
<accession>Q8R524</accession>
<organism>
    <name type="scientific">Rattus norvegicus</name>
    <name type="common">Rat</name>
    <dbReference type="NCBI Taxonomy" id="10116"/>
    <lineage>
        <taxon>Eukaryota</taxon>
        <taxon>Metazoa</taxon>
        <taxon>Chordata</taxon>
        <taxon>Craniata</taxon>
        <taxon>Vertebrata</taxon>
        <taxon>Euteleostomi</taxon>
        <taxon>Mammalia</taxon>
        <taxon>Eutheria</taxon>
        <taxon>Euarchontoglires</taxon>
        <taxon>Glires</taxon>
        <taxon>Rodentia</taxon>
        <taxon>Myomorpha</taxon>
        <taxon>Muroidea</taxon>
        <taxon>Muridae</taxon>
        <taxon>Murinae</taxon>
        <taxon>Rattus</taxon>
    </lineage>
</organism>
<reference key="1">
    <citation type="journal article" date="1998" name="Eur. J. Cell Biol.">
        <title>Identification of kinesin-like molecules in myogenic cells.</title>
        <authorList>
            <person name="Faire K."/>
            <person name="Gruber D."/>
            <person name="Bulinski J.C."/>
        </authorList>
    </citation>
    <scope>NUCLEOTIDE SEQUENCE [MRNA] (ISOFORM 3)</scope>
</reference>
<reference key="2">
    <citation type="journal article" date="2002" name="J. Biochem.">
        <title>KIF1Bbeta2, capable of interacting with CHP, is localized to synaptic vesicles.</title>
        <authorList>
            <person name="Nakamura N."/>
            <person name="Miyake Y."/>
            <person name="Matsushita M."/>
            <person name="Tanaka S."/>
            <person name="Inoue H."/>
            <person name="Kanazawa H."/>
        </authorList>
    </citation>
    <scope>NUCLEOTIDE SEQUENCE [MRNA] (ISOFORM 1)</scope>
    <scope>FUNCTION (ISOFORM 1)</scope>
    <scope>INTERACTION WITH CHP1</scope>
    <scope>SUBCELLULAR LOCATION (ISOFORM 1)</scope>
    <scope>TISSUE SPECIFICITY</scope>
    <source>
        <tissue>Brain</tissue>
    </source>
</reference>
<reference key="3">
    <citation type="journal article" date="2004" name="Traffic">
        <title>A novel kinesin-like protein, KIF1Bbeta3 is involved in the movement of lysosomes to the cell periphery in non-neuronal cells.</title>
        <authorList>
            <person name="Matsushita M."/>
            <person name="Tanaka S."/>
            <person name="Nakamura N."/>
            <person name="Inoue H."/>
            <person name="Kanazawa H."/>
        </authorList>
    </citation>
    <scope>NUCLEOTIDE SEQUENCE [MRNA] (ISOFORM 2)</scope>
    <scope>FUNCTION (ISOFORM 2)</scope>
    <scope>CATALYTIC ACTIVITY</scope>
    <scope>SUBCELLULAR LOCATION (ISOFORM 2)</scope>
    <scope>TISSUE SPECIFICITY (ISOFORM 2)</scope>
</reference>
<reference key="4">
    <citation type="journal article" date="2004" name="Nature">
        <title>Genome sequence of the Brown Norway rat yields insights into mammalian evolution.</title>
        <authorList>
            <person name="Gibbs R.A."/>
            <person name="Weinstock G.M."/>
            <person name="Metzker M.L."/>
            <person name="Muzny D.M."/>
            <person name="Sodergren E.J."/>
            <person name="Scherer S."/>
            <person name="Scott G."/>
            <person name="Steffen D."/>
            <person name="Worley K.C."/>
            <person name="Burch P.E."/>
            <person name="Okwuonu G."/>
            <person name="Hines S."/>
            <person name="Lewis L."/>
            <person name="Deramo C."/>
            <person name="Delgado O."/>
            <person name="Dugan-Rocha S."/>
            <person name="Miner G."/>
            <person name="Morgan M."/>
            <person name="Hawes A."/>
            <person name="Gill R."/>
            <person name="Holt R.A."/>
            <person name="Adams M.D."/>
            <person name="Amanatides P.G."/>
            <person name="Baden-Tillson H."/>
            <person name="Barnstead M."/>
            <person name="Chin S."/>
            <person name="Evans C.A."/>
            <person name="Ferriera S."/>
            <person name="Fosler C."/>
            <person name="Glodek A."/>
            <person name="Gu Z."/>
            <person name="Jennings D."/>
            <person name="Kraft C.L."/>
            <person name="Nguyen T."/>
            <person name="Pfannkoch C.M."/>
            <person name="Sitter C."/>
            <person name="Sutton G.G."/>
            <person name="Venter J.C."/>
            <person name="Woodage T."/>
            <person name="Smith D."/>
            <person name="Lee H.-M."/>
            <person name="Gustafson E."/>
            <person name="Cahill P."/>
            <person name="Kana A."/>
            <person name="Doucette-Stamm L."/>
            <person name="Weinstock K."/>
            <person name="Fechtel K."/>
            <person name="Weiss R.B."/>
            <person name="Dunn D.M."/>
            <person name="Green E.D."/>
            <person name="Blakesley R.W."/>
            <person name="Bouffard G.G."/>
            <person name="De Jong P.J."/>
            <person name="Osoegawa K."/>
            <person name="Zhu B."/>
            <person name="Marra M."/>
            <person name="Schein J."/>
            <person name="Bosdet I."/>
            <person name="Fjell C."/>
            <person name="Jones S."/>
            <person name="Krzywinski M."/>
            <person name="Mathewson C."/>
            <person name="Siddiqui A."/>
            <person name="Wye N."/>
            <person name="McPherson J."/>
            <person name="Zhao S."/>
            <person name="Fraser C.M."/>
            <person name="Shetty J."/>
            <person name="Shatsman S."/>
            <person name="Geer K."/>
            <person name="Chen Y."/>
            <person name="Abramzon S."/>
            <person name="Nierman W.C."/>
            <person name="Havlak P.H."/>
            <person name="Chen R."/>
            <person name="Durbin K.J."/>
            <person name="Egan A."/>
            <person name="Ren Y."/>
            <person name="Song X.-Z."/>
            <person name="Li B."/>
            <person name="Liu Y."/>
            <person name="Qin X."/>
            <person name="Cawley S."/>
            <person name="Cooney A.J."/>
            <person name="D'Souza L.M."/>
            <person name="Martin K."/>
            <person name="Wu J.Q."/>
            <person name="Gonzalez-Garay M.L."/>
            <person name="Jackson A.R."/>
            <person name="Kalafus K.J."/>
            <person name="McLeod M.P."/>
            <person name="Milosavljevic A."/>
            <person name="Virk D."/>
            <person name="Volkov A."/>
            <person name="Wheeler D.A."/>
            <person name="Zhang Z."/>
            <person name="Bailey J.A."/>
            <person name="Eichler E.E."/>
            <person name="Tuzun E."/>
            <person name="Birney E."/>
            <person name="Mongin E."/>
            <person name="Ureta-Vidal A."/>
            <person name="Woodwark C."/>
            <person name="Zdobnov E."/>
            <person name="Bork P."/>
            <person name="Suyama M."/>
            <person name="Torrents D."/>
            <person name="Alexandersson M."/>
            <person name="Trask B.J."/>
            <person name="Young J.M."/>
            <person name="Huang H."/>
            <person name="Wang H."/>
            <person name="Xing H."/>
            <person name="Daniels S."/>
            <person name="Gietzen D."/>
            <person name="Schmidt J."/>
            <person name="Stevens K."/>
            <person name="Vitt U."/>
            <person name="Wingrove J."/>
            <person name="Camara F."/>
            <person name="Mar Alba M."/>
            <person name="Abril J.F."/>
            <person name="Guigo R."/>
            <person name="Smit A."/>
            <person name="Dubchak I."/>
            <person name="Rubin E.M."/>
            <person name="Couronne O."/>
            <person name="Poliakov A."/>
            <person name="Huebner N."/>
            <person name="Ganten D."/>
            <person name="Goesele C."/>
            <person name="Hummel O."/>
            <person name="Kreitler T."/>
            <person name="Lee Y.-A."/>
            <person name="Monti J."/>
            <person name="Schulz H."/>
            <person name="Zimdahl H."/>
            <person name="Himmelbauer H."/>
            <person name="Lehrach H."/>
            <person name="Jacob H.J."/>
            <person name="Bromberg S."/>
            <person name="Gullings-Handley J."/>
            <person name="Jensen-Seaman M.I."/>
            <person name="Kwitek A.E."/>
            <person name="Lazar J."/>
            <person name="Pasko D."/>
            <person name="Tonellato P.J."/>
            <person name="Twigger S."/>
            <person name="Ponting C.P."/>
            <person name="Duarte J.M."/>
            <person name="Rice S."/>
            <person name="Goodstadt L."/>
            <person name="Beatson S.A."/>
            <person name="Emes R.D."/>
            <person name="Winter E.E."/>
            <person name="Webber C."/>
            <person name="Brandt P."/>
            <person name="Nyakatura G."/>
            <person name="Adetobi M."/>
            <person name="Chiaromonte F."/>
            <person name="Elnitski L."/>
            <person name="Eswara P."/>
            <person name="Hardison R.C."/>
            <person name="Hou M."/>
            <person name="Kolbe D."/>
            <person name="Makova K."/>
            <person name="Miller W."/>
            <person name="Nekrutenko A."/>
            <person name="Riemer C."/>
            <person name="Schwartz S."/>
            <person name="Taylor J."/>
            <person name="Yang S."/>
            <person name="Zhang Y."/>
            <person name="Lindpaintner K."/>
            <person name="Andrews T.D."/>
            <person name="Caccamo M."/>
            <person name="Clamp M."/>
            <person name="Clarke L."/>
            <person name="Curwen V."/>
            <person name="Durbin R.M."/>
            <person name="Eyras E."/>
            <person name="Searle S.M."/>
            <person name="Cooper G.M."/>
            <person name="Batzoglou S."/>
            <person name="Brudno M."/>
            <person name="Sidow A."/>
            <person name="Stone E.A."/>
            <person name="Payseur B.A."/>
            <person name="Bourque G."/>
            <person name="Lopez-Otin C."/>
            <person name="Puente X.S."/>
            <person name="Chakrabarti K."/>
            <person name="Chatterji S."/>
            <person name="Dewey C."/>
            <person name="Pachter L."/>
            <person name="Bray N."/>
            <person name="Yap V.B."/>
            <person name="Caspi A."/>
            <person name="Tesler G."/>
            <person name="Pevzner P.A."/>
            <person name="Haussler D."/>
            <person name="Roskin K.M."/>
            <person name="Baertsch R."/>
            <person name="Clawson H."/>
            <person name="Furey T.S."/>
            <person name="Hinrichs A.S."/>
            <person name="Karolchik D."/>
            <person name="Kent W.J."/>
            <person name="Rosenbloom K.R."/>
            <person name="Trumbower H."/>
            <person name="Weirauch M."/>
            <person name="Cooper D.N."/>
            <person name="Stenson P.D."/>
            <person name="Ma B."/>
            <person name="Brent M."/>
            <person name="Arumugam M."/>
            <person name="Shteynberg D."/>
            <person name="Copley R.R."/>
            <person name="Taylor M.S."/>
            <person name="Riethman H."/>
            <person name="Mudunuri U."/>
            <person name="Peterson J."/>
            <person name="Guyer M."/>
            <person name="Felsenfeld A."/>
            <person name="Old S."/>
            <person name="Mockrin S."/>
            <person name="Collins F.S."/>
        </authorList>
    </citation>
    <scope>NUCLEOTIDE SEQUENCE [LARGE SCALE GENOMIC DNA] (ISOFORM 4)</scope>
    <source>
        <strain>Brown Norway</strain>
    </source>
</reference>
<reference key="5">
    <citation type="journal article" date="2012" name="Nat. Commun.">
        <title>Quantitative maps of protein phosphorylation sites across 14 different rat organs and tissues.</title>
        <authorList>
            <person name="Lundby A."/>
            <person name="Secher A."/>
            <person name="Lage K."/>
            <person name="Nordsborg N.B."/>
            <person name="Dmytriyev A."/>
            <person name="Lundby C."/>
            <person name="Olsen J.V."/>
        </authorList>
    </citation>
    <scope>PHOSPHORYLATION [LARGE SCALE ANALYSIS] AT SER-1057; SER-1454; SER-1487 AND SER-1613</scope>
    <scope>IDENTIFICATION BY MASS SPECTROMETRY [LARGE SCALE ANALYSIS]</scope>
</reference>
<proteinExistence type="evidence at protein level"/>
<comment type="function">
    <text evidence="8 9">Has a plus-end-directed microtubule motor activity and functions as a motor for transport of vesicles and organelles along microtubules.</text>
</comment>
<comment type="function">
    <molecule>Isoform 1</molecule>
    <text evidence="13">Has a plus-end-directed microtubule motor activity and functions as a motor for anterograde synaptic vesicle transport along axonal microtubules from the cell body to the presynapse in neuronal cells.</text>
</comment>
<comment type="function">
    <molecule>Isoform 2</molecule>
    <text evidence="14">Has a plus-end-directed microtubule motor activity and functions as a motor for the translocation of lysosomes from perinuclear regions to the cell periphery.</text>
</comment>
<comment type="catalytic activity">
    <reaction evidence="14">
        <text>ATP + H2O + a kinesin associated with a microtubule at position (n) = ADP + phosphate a kinesin associated with a microtubule at position (n+1, toward the plus end).</text>
        <dbReference type="EC" id="5.6.1.3"/>
    </reaction>
</comment>
<comment type="subunit">
    <text evidence="1 2 8">Monomer (By similarity). Interacts with KIFBP; positively regulates KIF1B microtubule motor activity (By similarity). Interacts (via C-terminus end of the kinesin-motor domain) with CHP1; the interaction occurs in a calcium-dependent manner (PubMed:12204119). Interacts with MADD (via death domain); links this isoform of KIF1B to Rab3-carrying vesicles in anterograde synaptic vesicle transport (By similarity).</text>
</comment>
<comment type="interaction">
    <interactant intactId="EBI-6143515">
        <id>O88658-1</id>
    </interactant>
    <interactant intactId="EBI-917838">
        <id>P61023</id>
        <label>Chp1</label>
    </interactant>
    <organismsDiffer>false</organismsDiffer>
    <experiments>4</experiments>
</comment>
<comment type="subcellular location">
    <subcellularLocation>
        <location evidence="13 14">Cytoplasm</location>
        <location evidence="13 14">Cytoskeleton</location>
    </subcellularLocation>
    <text evidence="13 14">Has a plus-end-directed microtubule motor activity and therefore associates with microtubules.</text>
</comment>
<comment type="subcellular location">
    <molecule>Isoform 1</molecule>
    <subcellularLocation>
        <location evidence="8">Cytoplasmic vesicle</location>
        <location evidence="8">Secretory vesicle</location>
        <location evidence="8">Synaptic vesicle membrane</location>
    </subcellularLocation>
    <text evidence="13">Associates with synaptic vesicles and mediates their anterograde transport along axonal microtubules.</text>
</comment>
<comment type="subcellular location">
    <molecule>Isoform 2</molecule>
    <subcellularLocation>
        <location evidence="14">Lysosome</location>
    </subcellularLocation>
    <text evidence="14">Associates with lysosome and mediates their movement along microtubules.</text>
</comment>
<comment type="alternative products">
    <event type="alternative splicing"/>
    <isoform>
        <id>O88658-1</id>
        <name>1</name>
        <name evidence="10">KIF1Bbeta2</name>
        <sequence type="displayed"/>
    </isoform>
    <isoform>
        <id>O88658-2</id>
        <name>2</name>
        <name evidence="10">KIF1Bbeta3</name>
        <sequence type="described" ref="VSP_016617 VSP_016619 VSP_016622"/>
    </isoform>
    <isoform>
        <id>O88658-3</id>
        <name>3</name>
        <name>KIF1B</name>
        <sequence type="described" ref="VSP_016617 VSP_016618 VSP_016620 VSP_016621"/>
    </isoform>
    <isoform>
        <id>O88658-4</id>
        <name>4</name>
        <sequence type="described" ref="VSP_016617 VSP_062357 VSP_062358"/>
    </isoform>
</comment>
<comment type="tissue specificity">
    <molecule>Isoform 1</molecule>
    <text evidence="8">Expressed in the brain with lower expression in testis and liver (at protein level). Strongly expressed in the brain and ovary, with lower expression in lung, kidney, uterus, testis and liver.</text>
</comment>
<comment type="tissue specificity">
    <molecule>Isoform 2</molecule>
    <text evidence="9">Isoform 2 is expressed in non-neuronal tissues.</text>
</comment>
<comment type="similarity">
    <text evidence="6">Belongs to the TRAFAC class myosin-kinesin ATPase superfamily. Kinesin family. Unc-104 subfamily.</text>
</comment>
<evidence type="ECO:0000250" key="1">
    <source>
        <dbReference type="UniProtKB" id="O60333"/>
    </source>
</evidence>
<evidence type="ECO:0000250" key="2">
    <source>
        <dbReference type="UniProtKB" id="Q60575"/>
    </source>
</evidence>
<evidence type="ECO:0000255" key="3"/>
<evidence type="ECO:0000255" key="4">
    <source>
        <dbReference type="PROSITE-ProRule" id="PRU00086"/>
    </source>
</evidence>
<evidence type="ECO:0000255" key="5">
    <source>
        <dbReference type="PROSITE-ProRule" id="PRU00145"/>
    </source>
</evidence>
<evidence type="ECO:0000255" key="6">
    <source>
        <dbReference type="PROSITE-ProRule" id="PRU00283"/>
    </source>
</evidence>
<evidence type="ECO:0000256" key="7">
    <source>
        <dbReference type="SAM" id="MobiDB-lite"/>
    </source>
</evidence>
<evidence type="ECO:0000269" key="8">
    <source>
    </source>
</evidence>
<evidence type="ECO:0000269" key="9">
    <source>
    </source>
</evidence>
<evidence type="ECO:0000303" key="10">
    <source>
    </source>
</evidence>
<evidence type="ECO:0000303" key="11">
    <source>
    </source>
</evidence>
<evidence type="ECO:0000305" key="12"/>
<evidence type="ECO:0000305" key="13">
    <source>
    </source>
</evidence>
<evidence type="ECO:0000305" key="14">
    <source>
    </source>
</evidence>
<evidence type="ECO:0000312" key="15">
    <source>
        <dbReference type="RGD" id="621520"/>
    </source>
</evidence>
<evidence type="ECO:0007744" key="16">
    <source>
    </source>
</evidence>
<sequence length="1816" mass="204170">MSGASVKVAVRVRPFNSRETSKESKCIIQMQGNSTSIINPKNPKEAPKSFSFDYSYWSHTSPEDPCFASQSRVYNDIGKEMLLHAFEGYNVCIFAYGQTGAGKSYTMMGKQEESQAGIIPQLCEELFEKINDNCNEDMSYSVEVSYMEIYCERVRDLLNPKNKGNLRVREHPLLGPYVEDLSKLAVTSYTDIADLMDAGNKARTVAATNMNETSSRSHAVFTIVFTQKKQDPETNLSTEKVSKISLVDLAGSERADSTGAKGTRLKEGANINKSLTTLGKVISALAEVDNCTSKSKKKKKTDFIPYRDSVLTWLLRENLGGNSRTAMVAALSPADINYDETLSTLRYADRAKQIKCNAVINEDPNAKLVRELKEEVTRLKDLLRAQGLGDIIDIDPLMDDYSGSGGKYLKDFQNNKHRYLLASENQRPGNFSTASMGSLTSSPSSCSLNSQAGLTSVTSIQERIMSTPGGEEAIERLKESEKIIAELNETWEEKLRKTEAIRMEREALLAEMGVAIREDGGTLGVFSPKKTPHLVNLNEDPLMSECLLYYIKDGITRVGQADAERRQDIVLSGAHIKEEHCIFRSERNNTGEVIVTLEPCERSETYVNGKRVAHPVQLRSGNRIIMGKNHVFRFNHPEQARAEREKTPSAETPSEPVDWTFAQRELLEKQGIDMKQEMEKRLQEMEILYKREKEEADLLLEQQRLDYESKLQALQKQVETRSLAAETTEEEEEEEEVPWTQHEFELAQWAFRKWKSHQFTSLRDLLWGNAVYLKEANAISVELKKKVQFQFVLLTDTLYSPVPPELLPTEMGKTHEDRPFPRTVVAVEVQDLKNGATHYWSLDKLKQRLDLMREMYDRAGEVGSNAQDDSETTMTGSDPFYDRFHWFKLVGSSPIFHGCVNERLADRTPSPTFSTADSDITELADEQQDAMEDFDDEAFVDDTGSDAGTEEGSELFSDGHDPFYDRSPWFILVGRAFVYLSNLLYPVPLIHRVAIVSEKGEVRGFLRVAVQAIAADEEAPDYGSGIRQSGTAKISFDNEYFNQSDFPSAAMTRSGLSLEELRIVEGQGQSSEVISPPEEVNRMNDLDLKSGTLLDGKMVMEGFSEEIGNHLKLGSAFTFRVTVLQASGILPEYADIFCQFNFLHRHDEAFSTEPLKNNGRGSPLGFYHVQNIAVEVTESFVDYIKTKPIVFEVFGHYQQHPLHLQGQELNSPPQPSRRFFPPPMPLSRPVPATKLNTMNKTSLGQSMSKYDLLVWFEISELEPTGEYIPAVVDHTAGLPCQGTFLLHQGIQRRITVTIIHEKGSELHWKDVRELVVGRIRNKPEVDEAAVDAILSLNIISAKSLKSSHSSSRTFYRFEAVWDSSLHNSLLLNRVTPYGEKIYMTLSAYLELDHCIQPAVITKDVCMVFYSRDAKISPPRSLRNLFGSGYSKSPDSNRVTGIYELSLCKMADTGSPGMQRRRRKVLDTSVAYVRGEENLAGWRPRGDSLILEHQWELEKLELLHEVEKTRHFLLLRERLGDSIPKSMSDSLSPSLSSGTLSTSTSISSQISTTTFESAITPSESSGYDSADIESLVDREKELATKCLQLLTHTFNREFSQVHGSISDCKLSDISPIGRDPSVSSFSSSTLTPSSTCPSLVDSRSSSMDQKTPEANSRASSPCQEFEQFQIIPTVETPYLARAGKNEFLNLVPDIEEVRAGSVVSKKGYLHFKEPLSSNWAKHFVVVRRPYVFIYNSDKDPVERGIINLSTAQVEYSEDQQAMLKTPNTFAVCTKHRGVLLQALNDKDMNDWLYAFNPLLAGTIRSKLSRRCPSQPKY</sequence>
<feature type="initiator methionine" description="Removed" evidence="1">
    <location>
        <position position="1"/>
    </location>
</feature>
<feature type="chain" id="PRO_0000125409" description="Kinesin-like protein KIF1B">
    <location>
        <begin position="2"/>
        <end position="1816"/>
    </location>
</feature>
<feature type="domain" description="Kinesin motor" evidence="6">
    <location>
        <begin position="5"/>
        <end position="354"/>
    </location>
</feature>
<feature type="domain" description="FHA" evidence="4">
    <location>
        <begin position="556"/>
        <end position="612"/>
    </location>
</feature>
<feature type="domain" description="PH" evidence="5">
    <location>
        <begin position="1701"/>
        <end position="1799"/>
    </location>
</feature>
<feature type="region of interest" description="Interaction with KIFBP" evidence="1">
    <location>
        <begin position="270"/>
        <end position="350"/>
    </location>
</feature>
<feature type="region of interest" description="Disordered" evidence="7">
    <location>
        <begin position="431"/>
        <end position="450"/>
    </location>
</feature>
<feature type="region of interest" description="Disordered" evidence="7">
    <location>
        <begin position="1550"/>
        <end position="1570"/>
    </location>
</feature>
<feature type="region of interest" description="Disordered" evidence="7">
    <location>
        <begin position="1620"/>
        <end position="1659"/>
    </location>
</feature>
<feature type="coiled-coil region" evidence="3">
    <location>
        <begin position="470"/>
        <end position="512"/>
    </location>
</feature>
<feature type="coiled-coil region" evidence="3">
    <location>
        <begin position="672"/>
        <end position="731"/>
    </location>
</feature>
<feature type="compositionally biased region" description="Low complexity" evidence="7">
    <location>
        <begin position="432"/>
        <end position="450"/>
    </location>
</feature>
<feature type="compositionally biased region" description="Low complexity" evidence="7">
    <location>
        <begin position="1620"/>
        <end position="1637"/>
    </location>
</feature>
<feature type="compositionally biased region" description="Polar residues" evidence="7">
    <location>
        <begin position="1640"/>
        <end position="1659"/>
    </location>
</feature>
<feature type="binding site" evidence="6">
    <location>
        <begin position="97"/>
        <end position="104"/>
    </location>
    <ligand>
        <name>ATP</name>
        <dbReference type="ChEBI" id="CHEBI:30616"/>
    </ligand>
</feature>
<feature type="modified residue" description="N-acetylserine" evidence="1">
    <location>
        <position position="2"/>
    </location>
</feature>
<feature type="modified residue" description="Phosphothreonine" evidence="2">
    <location>
        <position position="647"/>
    </location>
</feature>
<feature type="modified residue" description="Phosphothreonine" evidence="2">
    <location>
        <position position="652"/>
    </location>
</feature>
<feature type="modified residue" description="Phosphoserine" evidence="1">
    <location>
        <position position="1054"/>
    </location>
</feature>
<feature type="modified residue" description="Phosphoserine" evidence="16">
    <location>
        <position position="1057"/>
    </location>
</feature>
<feature type="modified residue" description="Phosphoserine" evidence="1">
    <location>
        <position position="1416"/>
    </location>
</feature>
<feature type="modified residue" description="Phosphoserine" evidence="16">
    <location>
        <position position="1454"/>
    </location>
</feature>
<feature type="modified residue" description="Phosphoserine" evidence="16">
    <location>
        <position position="1487"/>
    </location>
</feature>
<feature type="modified residue" description="Phosphoserine" evidence="1">
    <location>
        <position position="1573"/>
    </location>
</feature>
<feature type="modified residue" description="Phosphoserine" evidence="1">
    <location>
        <position position="1603"/>
    </location>
</feature>
<feature type="modified residue" description="Phosphoserine" evidence="1">
    <location>
        <position position="1610"/>
    </location>
</feature>
<feature type="modified residue" description="Phosphoserine" evidence="16">
    <location>
        <position position="1613"/>
    </location>
</feature>
<feature type="splice variant" id="VSP_016617" description="In isoform 2, isoform 3 and isoform 4." evidence="10 11">
    <location>
        <begin position="289"/>
        <end position="294"/>
    </location>
</feature>
<feature type="splice variant" id="VSP_016618" description="In isoform 3." evidence="11">
    <original>L</original>
    <variation>LST</variation>
    <location>
        <position position="342"/>
    </location>
</feature>
<feature type="splice variant" id="VSP_016619" description="In isoform 2." evidence="10">
    <original>IDPLMDDYSGSGGKYLKDFQNNKHRYLLASENQRPGNFSTA</original>
    <variation>T</variation>
    <location>
        <begin position="394"/>
        <end position="434"/>
    </location>
</feature>
<feature type="splice variant" id="VSP_016620" description="In isoform 3." evidence="11">
    <original>IDPLMDDYSGSGGKY</original>
    <variation>N</variation>
    <location>
        <begin position="394"/>
        <end position="408"/>
    </location>
</feature>
<feature type="splice variant" id="VSP_016621" description="In isoform 3." evidence="11">
    <location>
        <begin position="707"/>
        <end position="1816"/>
    </location>
</feature>
<feature type="splice variant" id="VSP_062357" description="In isoform 4.">
    <original>YESKLQALQKQVETRSLAAETTEEEEEEEEVPWTQHEFELAQWAFRKWKSHQFTSLRDLLWGNAVYLKEANAISVELKKKVQFQFVLLTDTLYSPVPPELLPTEMGKTHEDRPFPRTVVAVEVQDLKNGATHYWSLDKLKQRLDLMREMYDRAGEVGSNAQDDSETTMTGSDPFYDRFHWFKLVGSSPIFHGCVNERLADRTPSPTFSTADSDITELADEQQDAMEDFDDEAFVDDTGSDAGTEEGSELFSDGHDPFYDRSPWFILVGRAFVYLSNLLYPVPLIHRVAIVSEKGEVRGFLRVAVQAIAADEEAPDYGSGIRQSGTAKISFDNEYFNQSDFPSAAMTRSGLSLEELRIVEGQGQSSEVISPPEEVNRMNDLDLKSGTLLDGKMVMEGFSEEIGNHLKLGSAFTFRVTVLQASGILPEYADIFCQFNFLHRHDEAFSTEPLKNNGRGSPLGFYHVQNIAVEVTESFVDYIKTKPIVFEVFGH</original>
    <variation>ADSDSGDDSDKRSCEESWKLITSLREKLPPSKLQTIVKKCGLPSSGKKREPIKMYQIPQRRRLSKDSKWVTISDLKIQAVKEICYEVALNDFRHSRQEIEALAIVKMKELCAMYGKKDPNERDSWRAVARDVWDTVGVGDEKIEDMMVTGKAGTDVDDLKVHIDKLEDILQEVKKQNNMKDEEIKVLRNKMLKMEKVLPLIGSQEQKSQGNQKTEEPLVASANSIPDTGIRKGDSRELAKEERVSQLMNGDPAFRRGRLRWMRQEQIRFKNLQQQEITKQLRRQNVPHRFIPPENRKPRFPFKSNAKHRNSWSPGTHIIITEDEVIELRVPKDEEGRRGNKEEKVGRAASEDPQSACGSQGTRSQGHIQVSKQHIISQQAPPPLRWRSNSLNNGQPKNMRCQAAASSESLNSHSSHPNADVQTFQAKRHIHQHRQSYCNYNTGDQVEGSTANCCQKQTDKPSHCSQFETPPRMRRQFSAPNLKAGRETTV</variation>
    <location>
        <begin position="707"/>
        <end position="1196"/>
    </location>
</feature>
<feature type="splice variant" id="VSP_016622" description="In isoform 2." evidence="10">
    <location>
        <begin position="889"/>
        <end position="971"/>
    </location>
</feature>
<feature type="splice variant" id="VSP_062358" description="In isoform 4.">
    <location>
        <begin position="1197"/>
        <end position="1816"/>
    </location>
</feature>
<feature type="sequence conflict" description="In Ref. 1; AAC33292." evidence="12" ref="1">
    <original>QL</original>
    <variation>TC</variation>
    <location>
        <begin position="121"/>
        <end position="122"/>
    </location>
</feature>
<feature type="sequence conflict" description="In Ref. 1; AAC33292." evidence="12" ref="1">
    <original>EV</original>
    <variation>S</variation>
    <location>
        <begin position="143"/>
        <end position="144"/>
    </location>
</feature>
<feature type="sequence conflict" description="In Ref. 1; AAC33292." evidence="12" ref="1">
    <original>S</original>
    <variation>T</variation>
    <location>
        <position position="242"/>
    </location>
</feature>
<feature type="sequence conflict" description="In Ref. 1; AAC33292." evidence="12" ref="1">
    <original>A</original>
    <variation>R</variation>
    <location>
        <position position="269"/>
    </location>
</feature>
<feature type="sequence conflict" description="In Ref. 1; AAC33292." evidence="12" ref="1">
    <original>HL</original>
    <variation>QV</variation>
    <location>
        <begin position="533"/>
        <end position="534"/>
    </location>
</feature>
<feature type="sequence conflict" description="In Ref. 1; AAC33292." evidence="12" ref="1">
    <original>RV</original>
    <variation>KGF</variation>
    <location>
        <begin position="557"/>
        <end position="558"/>
    </location>
</feature>
<feature type="sequence conflict" description="In Ref. 1; AAC33292." evidence="12" ref="1">
    <original>H</original>
    <variation>HT</variation>
    <location>
        <position position="575"/>
    </location>
</feature>
<feature type="sequence conflict" description="In Ref. 1; AAC33292." evidence="12" ref="1">
    <original>NRIIMG</original>
    <variation>TVSSWV</variation>
    <location>
        <begin position="622"/>
        <end position="627"/>
    </location>
</feature>
<gene>
    <name evidence="15" type="primary">Kif1b</name>
</gene>
<keyword id="KW-0007">Acetylation</keyword>
<keyword id="KW-0025">Alternative splicing</keyword>
<keyword id="KW-0067">ATP-binding</keyword>
<keyword id="KW-0175">Coiled coil</keyword>
<keyword id="KW-0963">Cytoplasm</keyword>
<keyword id="KW-0968">Cytoplasmic vesicle</keyword>
<keyword id="KW-0206">Cytoskeleton</keyword>
<keyword id="KW-0413">Isomerase</keyword>
<keyword id="KW-0458">Lysosome</keyword>
<keyword id="KW-0472">Membrane</keyword>
<keyword id="KW-0493">Microtubule</keyword>
<keyword id="KW-0505">Motor protein</keyword>
<keyword id="KW-0547">Nucleotide-binding</keyword>
<keyword id="KW-0597">Phosphoprotein</keyword>
<keyword id="KW-1185">Reference proteome</keyword>
<keyword id="KW-0770">Synapse</keyword>